<organism>
    <name type="scientific">Bdellovibrio bacteriovorus (strain ATCC 15356 / DSM 50701 / NCIMB 9529 / HD100)</name>
    <dbReference type="NCBI Taxonomy" id="264462"/>
    <lineage>
        <taxon>Bacteria</taxon>
        <taxon>Pseudomonadati</taxon>
        <taxon>Bdellovibrionota</taxon>
        <taxon>Bdellovibrionia</taxon>
        <taxon>Bdellovibrionales</taxon>
        <taxon>Pseudobdellovibrionaceae</taxon>
        <taxon>Bdellovibrio</taxon>
    </lineage>
</organism>
<gene>
    <name evidence="1" type="primary">nuoK</name>
    <name type="ordered locus">Bd3889</name>
</gene>
<protein>
    <recommendedName>
        <fullName evidence="1">NADH-quinone oxidoreductase subunit K</fullName>
        <ecNumber evidence="1">7.1.1.-</ecNumber>
    </recommendedName>
    <alternativeName>
        <fullName evidence="1">NADH dehydrogenase I subunit K</fullName>
    </alternativeName>
    <alternativeName>
        <fullName evidence="1">NDH-1 subunit K</fullName>
    </alternativeName>
</protein>
<feature type="chain" id="PRO_0000389957" description="NADH-quinone oxidoreductase subunit K">
    <location>
        <begin position="1"/>
        <end position="107"/>
    </location>
</feature>
<feature type="transmembrane region" description="Helical" evidence="1">
    <location>
        <begin position="11"/>
        <end position="31"/>
    </location>
</feature>
<feature type="transmembrane region" description="Helical" evidence="1">
    <location>
        <begin position="36"/>
        <end position="56"/>
    </location>
</feature>
<feature type="transmembrane region" description="Helical" evidence="1">
    <location>
        <begin position="67"/>
        <end position="87"/>
    </location>
</feature>
<dbReference type="EC" id="7.1.1.-" evidence="1"/>
<dbReference type="EMBL" id="BX842656">
    <property type="protein sequence ID" value="CAE81244.1"/>
    <property type="molecule type" value="Genomic_DNA"/>
</dbReference>
<dbReference type="RefSeq" id="WP_011166187.1">
    <property type="nucleotide sequence ID" value="NC_005363.1"/>
</dbReference>
<dbReference type="SMR" id="Q6MGN5"/>
<dbReference type="STRING" id="264462.Bd3889"/>
<dbReference type="GeneID" id="93014655"/>
<dbReference type="KEGG" id="bba:Bd3889"/>
<dbReference type="eggNOG" id="COG0713">
    <property type="taxonomic scope" value="Bacteria"/>
</dbReference>
<dbReference type="HOGENOM" id="CLU_144724_0_0_7"/>
<dbReference type="Proteomes" id="UP000008080">
    <property type="component" value="Chromosome"/>
</dbReference>
<dbReference type="GO" id="GO:0030964">
    <property type="term" value="C:NADH dehydrogenase complex"/>
    <property type="evidence" value="ECO:0007669"/>
    <property type="project" value="TreeGrafter"/>
</dbReference>
<dbReference type="GO" id="GO:0005886">
    <property type="term" value="C:plasma membrane"/>
    <property type="evidence" value="ECO:0007669"/>
    <property type="project" value="UniProtKB-SubCell"/>
</dbReference>
<dbReference type="GO" id="GO:0050136">
    <property type="term" value="F:NADH:ubiquinone reductase (non-electrogenic) activity"/>
    <property type="evidence" value="ECO:0007669"/>
    <property type="project" value="UniProtKB-UniRule"/>
</dbReference>
<dbReference type="GO" id="GO:0048038">
    <property type="term" value="F:quinone binding"/>
    <property type="evidence" value="ECO:0007669"/>
    <property type="project" value="UniProtKB-KW"/>
</dbReference>
<dbReference type="GO" id="GO:0042773">
    <property type="term" value="P:ATP synthesis coupled electron transport"/>
    <property type="evidence" value="ECO:0007669"/>
    <property type="project" value="InterPro"/>
</dbReference>
<dbReference type="FunFam" id="1.10.287.3510:FF:000001">
    <property type="entry name" value="NADH-quinone oxidoreductase subunit K"/>
    <property type="match status" value="1"/>
</dbReference>
<dbReference type="Gene3D" id="1.10.287.3510">
    <property type="match status" value="1"/>
</dbReference>
<dbReference type="HAMAP" id="MF_01456">
    <property type="entry name" value="NDH1_NuoK"/>
    <property type="match status" value="1"/>
</dbReference>
<dbReference type="InterPro" id="IPR001133">
    <property type="entry name" value="NADH_UbQ_OxRdtase_chain4L/K"/>
</dbReference>
<dbReference type="InterPro" id="IPR039428">
    <property type="entry name" value="NUOK/Mnh_C1-like"/>
</dbReference>
<dbReference type="NCBIfam" id="NF004320">
    <property type="entry name" value="PRK05715.1-2"/>
    <property type="match status" value="1"/>
</dbReference>
<dbReference type="NCBIfam" id="NF004321">
    <property type="entry name" value="PRK05715.1-3"/>
    <property type="match status" value="1"/>
</dbReference>
<dbReference type="NCBIfam" id="NF004323">
    <property type="entry name" value="PRK05715.1-5"/>
    <property type="match status" value="1"/>
</dbReference>
<dbReference type="PANTHER" id="PTHR11434:SF21">
    <property type="entry name" value="NADH DEHYDROGENASE SUBUNIT 4L-RELATED"/>
    <property type="match status" value="1"/>
</dbReference>
<dbReference type="PANTHER" id="PTHR11434">
    <property type="entry name" value="NADH-UBIQUINONE OXIDOREDUCTASE SUBUNIT ND4L"/>
    <property type="match status" value="1"/>
</dbReference>
<dbReference type="Pfam" id="PF00420">
    <property type="entry name" value="Oxidored_q2"/>
    <property type="match status" value="1"/>
</dbReference>
<evidence type="ECO:0000255" key="1">
    <source>
        <dbReference type="HAMAP-Rule" id="MF_01456"/>
    </source>
</evidence>
<accession>Q6MGN5</accession>
<keyword id="KW-0997">Cell inner membrane</keyword>
<keyword id="KW-1003">Cell membrane</keyword>
<keyword id="KW-0472">Membrane</keyword>
<keyword id="KW-0520">NAD</keyword>
<keyword id="KW-0874">Quinone</keyword>
<keyword id="KW-1185">Reference proteome</keyword>
<keyword id="KW-1278">Translocase</keyword>
<keyword id="KW-0812">Transmembrane</keyword>
<keyword id="KW-1133">Transmembrane helix</keyword>
<keyword id="KW-0813">Transport</keyword>
<keyword id="KW-0830">Ubiquinone</keyword>
<name>NUOK_BDEBA</name>
<comment type="function">
    <text evidence="1">NDH-1 shuttles electrons from NADH, via FMN and iron-sulfur (Fe-S) centers, to quinones in the respiratory chain. The immediate electron acceptor for the enzyme in this species is believed to be ubiquinone. Couples the redox reaction to proton translocation (for every two electrons transferred, four hydrogen ions are translocated across the cytoplasmic membrane), and thus conserves the redox energy in a proton gradient.</text>
</comment>
<comment type="catalytic activity">
    <reaction evidence="1">
        <text>a quinone + NADH + 5 H(+)(in) = a quinol + NAD(+) + 4 H(+)(out)</text>
        <dbReference type="Rhea" id="RHEA:57888"/>
        <dbReference type="ChEBI" id="CHEBI:15378"/>
        <dbReference type="ChEBI" id="CHEBI:24646"/>
        <dbReference type="ChEBI" id="CHEBI:57540"/>
        <dbReference type="ChEBI" id="CHEBI:57945"/>
        <dbReference type="ChEBI" id="CHEBI:132124"/>
    </reaction>
</comment>
<comment type="subunit">
    <text evidence="1">NDH-1 is composed of 14 different subunits. Subunits NuoA, H, J, K, L, M, N constitute the membrane sector of the complex.</text>
</comment>
<comment type="subcellular location">
    <subcellularLocation>
        <location evidence="1">Cell inner membrane</location>
        <topology evidence="1">Multi-pass membrane protein</topology>
    </subcellularLocation>
</comment>
<comment type="similarity">
    <text evidence="1">Belongs to the complex I subunit 4L family.</text>
</comment>
<sequence>MNTEFINNIGLTHYLVLAALLFVMGMAGVLLRRNVIVLLMSIELMLNSVNLTFVAFSKYLGLLDGHIMVFFVMTIAAAEAAVGLALAVSIFKRFNEVNIRFFEHLKG</sequence>
<proteinExistence type="inferred from homology"/>
<reference key="1">
    <citation type="journal article" date="2004" name="Science">
        <title>A predator unmasked: life cycle of Bdellovibrio bacteriovorus from a genomic perspective.</title>
        <authorList>
            <person name="Rendulic S."/>
            <person name="Jagtap P."/>
            <person name="Rosinus A."/>
            <person name="Eppinger M."/>
            <person name="Baar C."/>
            <person name="Lanz C."/>
            <person name="Keller H."/>
            <person name="Lambert C."/>
            <person name="Evans K.J."/>
            <person name="Goesmann A."/>
            <person name="Meyer F."/>
            <person name="Sockett R.E."/>
            <person name="Schuster S.C."/>
        </authorList>
    </citation>
    <scope>NUCLEOTIDE SEQUENCE [LARGE SCALE GENOMIC DNA]</scope>
    <source>
        <strain>ATCC 15356 / DSM 50701 / NCIMB 9529 / HD100</strain>
    </source>
</reference>